<dbReference type="EC" id="3.5.2.3" evidence="1"/>
<dbReference type="EMBL" id="CP000076">
    <property type="protein sequence ID" value="AAY94085.1"/>
    <property type="molecule type" value="Genomic_DNA"/>
</dbReference>
<dbReference type="RefSeq" id="WP_011063109.1">
    <property type="nucleotide sequence ID" value="NC_004129.6"/>
</dbReference>
<dbReference type="SMR" id="Q4K747"/>
<dbReference type="STRING" id="220664.PFL_4855"/>
<dbReference type="KEGG" id="pfl:PFL_4855"/>
<dbReference type="PATRIC" id="fig|220664.5.peg.4969"/>
<dbReference type="eggNOG" id="COG0418">
    <property type="taxonomic scope" value="Bacteria"/>
</dbReference>
<dbReference type="HOGENOM" id="CLU_041558_1_0_6"/>
<dbReference type="UniPathway" id="UPA00070">
    <property type="reaction ID" value="UER00117"/>
</dbReference>
<dbReference type="Proteomes" id="UP000008540">
    <property type="component" value="Chromosome"/>
</dbReference>
<dbReference type="GO" id="GO:0005829">
    <property type="term" value="C:cytosol"/>
    <property type="evidence" value="ECO:0007669"/>
    <property type="project" value="TreeGrafter"/>
</dbReference>
<dbReference type="GO" id="GO:0004151">
    <property type="term" value="F:dihydroorotase activity"/>
    <property type="evidence" value="ECO:0007669"/>
    <property type="project" value="UniProtKB-UniRule"/>
</dbReference>
<dbReference type="GO" id="GO:0008270">
    <property type="term" value="F:zinc ion binding"/>
    <property type="evidence" value="ECO:0007669"/>
    <property type="project" value="UniProtKB-UniRule"/>
</dbReference>
<dbReference type="GO" id="GO:0006207">
    <property type="term" value="P:'de novo' pyrimidine nucleobase biosynthetic process"/>
    <property type="evidence" value="ECO:0007669"/>
    <property type="project" value="TreeGrafter"/>
</dbReference>
<dbReference type="GO" id="GO:0044205">
    <property type="term" value="P:'de novo' UMP biosynthetic process"/>
    <property type="evidence" value="ECO:0007669"/>
    <property type="project" value="UniProtKB-UniRule"/>
</dbReference>
<dbReference type="CDD" id="cd01294">
    <property type="entry name" value="DHOase"/>
    <property type="match status" value="1"/>
</dbReference>
<dbReference type="FunFam" id="3.20.20.140:FF:000006">
    <property type="entry name" value="Dihydroorotase"/>
    <property type="match status" value="1"/>
</dbReference>
<dbReference type="Gene3D" id="3.20.20.140">
    <property type="entry name" value="Metal-dependent hydrolases"/>
    <property type="match status" value="1"/>
</dbReference>
<dbReference type="HAMAP" id="MF_00219">
    <property type="entry name" value="PyrC_classII"/>
    <property type="match status" value="1"/>
</dbReference>
<dbReference type="InterPro" id="IPR006680">
    <property type="entry name" value="Amidohydro-rel"/>
</dbReference>
<dbReference type="InterPro" id="IPR004721">
    <property type="entry name" value="DHOdimr"/>
</dbReference>
<dbReference type="InterPro" id="IPR002195">
    <property type="entry name" value="Dihydroorotase_CS"/>
</dbReference>
<dbReference type="InterPro" id="IPR032466">
    <property type="entry name" value="Metal_Hydrolase"/>
</dbReference>
<dbReference type="NCBIfam" id="TIGR00856">
    <property type="entry name" value="pyrC_dimer"/>
    <property type="match status" value="1"/>
</dbReference>
<dbReference type="PANTHER" id="PTHR43137">
    <property type="entry name" value="DIHYDROOROTASE"/>
    <property type="match status" value="1"/>
</dbReference>
<dbReference type="PANTHER" id="PTHR43137:SF1">
    <property type="entry name" value="DIHYDROOROTASE"/>
    <property type="match status" value="1"/>
</dbReference>
<dbReference type="Pfam" id="PF01979">
    <property type="entry name" value="Amidohydro_1"/>
    <property type="match status" value="1"/>
</dbReference>
<dbReference type="PIRSF" id="PIRSF001237">
    <property type="entry name" value="DHOdimr"/>
    <property type="match status" value="1"/>
</dbReference>
<dbReference type="SUPFAM" id="SSF51556">
    <property type="entry name" value="Metallo-dependent hydrolases"/>
    <property type="match status" value="1"/>
</dbReference>
<dbReference type="PROSITE" id="PS00482">
    <property type="entry name" value="DIHYDROOROTASE_1"/>
    <property type="match status" value="1"/>
</dbReference>
<dbReference type="PROSITE" id="PS00483">
    <property type="entry name" value="DIHYDROOROTASE_2"/>
    <property type="match status" value="1"/>
</dbReference>
<feature type="chain" id="PRO_1000024035" description="Dihydroorotase">
    <location>
        <begin position="1"/>
        <end position="348"/>
    </location>
</feature>
<feature type="active site" evidence="1">
    <location>
        <position position="248"/>
    </location>
</feature>
<feature type="binding site" evidence="1">
    <location>
        <position position="14"/>
    </location>
    <ligand>
        <name>Zn(2+)</name>
        <dbReference type="ChEBI" id="CHEBI:29105"/>
        <label>1</label>
    </ligand>
</feature>
<feature type="binding site" evidence="1">
    <location>
        <begin position="16"/>
        <end position="18"/>
    </location>
    <ligand>
        <name>substrate</name>
    </ligand>
</feature>
<feature type="binding site" evidence="1">
    <location>
        <position position="16"/>
    </location>
    <ligand>
        <name>Zn(2+)</name>
        <dbReference type="ChEBI" id="CHEBI:29105"/>
        <label>1</label>
    </ligand>
</feature>
<feature type="binding site" evidence="1">
    <location>
        <position position="42"/>
    </location>
    <ligand>
        <name>substrate</name>
    </ligand>
</feature>
<feature type="binding site" description="via carbamate group" evidence="1">
    <location>
        <position position="100"/>
    </location>
    <ligand>
        <name>Zn(2+)</name>
        <dbReference type="ChEBI" id="CHEBI:29105"/>
        <label>1</label>
    </ligand>
</feature>
<feature type="binding site" description="via carbamate group" evidence="1">
    <location>
        <position position="100"/>
    </location>
    <ligand>
        <name>Zn(2+)</name>
        <dbReference type="ChEBI" id="CHEBI:29105"/>
        <label>2</label>
    </ligand>
</feature>
<feature type="binding site" evidence="1">
    <location>
        <position position="137"/>
    </location>
    <ligand>
        <name>substrate</name>
    </ligand>
</feature>
<feature type="binding site" evidence="1">
    <location>
        <position position="137"/>
    </location>
    <ligand>
        <name>Zn(2+)</name>
        <dbReference type="ChEBI" id="CHEBI:29105"/>
        <label>2</label>
    </ligand>
</feature>
<feature type="binding site" evidence="1">
    <location>
        <position position="175"/>
    </location>
    <ligand>
        <name>Zn(2+)</name>
        <dbReference type="ChEBI" id="CHEBI:29105"/>
        <label>2</label>
    </ligand>
</feature>
<feature type="binding site" evidence="1">
    <location>
        <position position="220"/>
    </location>
    <ligand>
        <name>substrate</name>
    </ligand>
</feature>
<feature type="binding site" evidence="1">
    <location>
        <position position="248"/>
    </location>
    <ligand>
        <name>Zn(2+)</name>
        <dbReference type="ChEBI" id="CHEBI:29105"/>
        <label>1</label>
    </ligand>
</feature>
<feature type="binding site" evidence="1">
    <location>
        <position position="252"/>
    </location>
    <ligand>
        <name>substrate</name>
    </ligand>
</feature>
<feature type="binding site" evidence="1">
    <location>
        <position position="264"/>
    </location>
    <ligand>
        <name>substrate</name>
    </ligand>
</feature>
<feature type="modified residue" description="N6-carboxylysine" evidence="1">
    <location>
        <position position="100"/>
    </location>
</feature>
<organism>
    <name type="scientific">Pseudomonas fluorescens (strain ATCC BAA-477 / NRRL B-23932 / Pf-5)</name>
    <dbReference type="NCBI Taxonomy" id="220664"/>
    <lineage>
        <taxon>Bacteria</taxon>
        <taxon>Pseudomonadati</taxon>
        <taxon>Pseudomonadota</taxon>
        <taxon>Gammaproteobacteria</taxon>
        <taxon>Pseudomonadales</taxon>
        <taxon>Pseudomonadaceae</taxon>
        <taxon>Pseudomonas</taxon>
    </lineage>
</organism>
<gene>
    <name evidence="1" type="primary">pyrC</name>
    <name type="ordered locus">PFL_4855</name>
</gene>
<accession>Q4K747</accession>
<sequence length="348" mass="38416">MSDRLTLLRPDDWHIHLRDGAVLPNTVADVARTFGRAIIMPNLVPPVRNAAEADAYRQRILAARPAGSRFEPLMVLYLTDRTQPEEIRAAKACGFVHAAKLYPAGATTNSDSGVTSIDKIFPVLEAMAEVGLPLLIHGEVTRGDVDVFDREKIFIDEHMRRVVERFPSLKVVFEHITTAEAVQFVKEASANVGATITAHHLLYNRNHMLVGGIRPHFYCLPILKRNTHQEALLDAATSGNAKFFLGTDSAPHAQHAKEAACGCAGCYSAYAAIELYAEAFEQRNALDQLEAFASLNGPRFYGLPANTDSITLVREEWTAPASLPFGELTVIPLRAGEKLRWRLLEDHS</sequence>
<name>PYRC_PSEF5</name>
<keyword id="KW-0378">Hydrolase</keyword>
<keyword id="KW-0479">Metal-binding</keyword>
<keyword id="KW-0665">Pyrimidine biosynthesis</keyword>
<keyword id="KW-0862">Zinc</keyword>
<comment type="function">
    <text evidence="1">Catalyzes the reversible cyclization of carbamoyl aspartate to dihydroorotate.</text>
</comment>
<comment type="catalytic activity">
    <reaction evidence="1">
        <text>(S)-dihydroorotate + H2O = N-carbamoyl-L-aspartate + H(+)</text>
        <dbReference type="Rhea" id="RHEA:24296"/>
        <dbReference type="ChEBI" id="CHEBI:15377"/>
        <dbReference type="ChEBI" id="CHEBI:15378"/>
        <dbReference type="ChEBI" id="CHEBI:30864"/>
        <dbReference type="ChEBI" id="CHEBI:32814"/>
        <dbReference type="EC" id="3.5.2.3"/>
    </reaction>
</comment>
<comment type="cofactor">
    <cofactor evidence="1">
        <name>Zn(2+)</name>
        <dbReference type="ChEBI" id="CHEBI:29105"/>
    </cofactor>
    <text evidence="1">Binds 2 Zn(2+) ions per subunit.</text>
</comment>
<comment type="pathway">
    <text evidence="1">Pyrimidine metabolism; UMP biosynthesis via de novo pathway; (S)-dihydroorotate from bicarbonate: step 3/3.</text>
</comment>
<comment type="subunit">
    <text evidence="1">Homodimer.</text>
</comment>
<comment type="similarity">
    <text evidence="1">Belongs to the metallo-dependent hydrolases superfamily. DHOase family. Class II DHOase subfamily.</text>
</comment>
<proteinExistence type="inferred from homology"/>
<protein>
    <recommendedName>
        <fullName evidence="1">Dihydroorotase</fullName>
        <shortName evidence="1">DHOase</shortName>
        <ecNumber evidence="1">3.5.2.3</ecNumber>
    </recommendedName>
</protein>
<reference key="1">
    <citation type="journal article" date="2005" name="Nat. Biotechnol.">
        <title>Complete genome sequence of the plant commensal Pseudomonas fluorescens Pf-5.</title>
        <authorList>
            <person name="Paulsen I.T."/>
            <person name="Press C.M."/>
            <person name="Ravel J."/>
            <person name="Kobayashi D.Y."/>
            <person name="Myers G.S.A."/>
            <person name="Mavrodi D.V."/>
            <person name="DeBoy R.T."/>
            <person name="Seshadri R."/>
            <person name="Ren Q."/>
            <person name="Madupu R."/>
            <person name="Dodson R.J."/>
            <person name="Durkin A.S."/>
            <person name="Brinkac L.M."/>
            <person name="Daugherty S.C."/>
            <person name="Sullivan S.A."/>
            <person name="Rosovitz M.J."/>
            <person name="Gwinn M.L."/>
            <person name="Zhou L."/>
            <person name="Schneider D.J."/>
            <person name="Cartinhour S.W."/>
            <person name="Nelson W.C."/>
            <person name="Weidman J."/>
            <person name="Watkins K."/>
            <person name="Tran K."/>
            <person name="Khouri H."/>
            <person name="Pierson E.A."/>
            <person name="Pierson L.S. III"/>
            <person name="Thomashow L.S."/>
            <person name="Loper J.E."/>
        </authorList>
    </citation>
    <scope>NUCLEOTIDE SEQUENCE [LARGE SCALE GENOMIC DNA]</scope>
    <source>
        <strain>ATCC BAA-477 / NRRL B-23932 / Pf-5</strain>
    </source>
</reference>
<evidence type="ECO:0000255" key="1">
    <source>
        <dbReference type="HAMAP-Rule" id="MF_00219"/>
    </source>
</evidence>